<organism>
    <name type="scientific">Streptococcus thermophilus (strain ATCC BAA-491 / LMD-9)</name>
    <dbReference type="NCBI Taxonomy" id="322159"/>
    <lineage>
        <taxon>Bacteria</taxon>
        <taxon>Bacillati</taxon>
        <taxon>Bacillota</taxon>
        <taxon>Bacilli</taxon>
        <taxon>Lactobacillales</taxon>
        <taxon>Streptococcaceae</taxon>
        <taxon>Streptococcus</taxon>
    </lineage>
</organism>
<reference key="1">
    <citation type="journal article" date="2006" name="Proc. Natl. Acad. Sci. U.S.A.">
        <title>Comparative genomics of the lactic acid bacteria.</title>
        <authorList>
            <person name="Makarova K.S."/>
            <person name="Slesarev A."/>
            <person name="Wolf Y.I."/>
            <person name="Sorokin A."/>
            <person name="Mirkin B."/>
            <person name="Koonin E.V."/>
            <person name="Pavlov A."/>
            <person name="Pavlova N."/>
            <person name="Karamychev V."/>
            <person name="Polouchine N."/>
            <person name="Shakhova V."/>
            <person name="Grigoriev I."/>
            <person name="Lou Y."/>
            <person name="Rohksar D."/>
            <person name="Lucas S."/>
            <person name="Huang K."/>
            <person name="Goodstein D.M."/>
            <person name="Hawkins T."/>
            <person name="Plengvidhya V."/>
            <person name="Welker D."/>
            <person name="Hughes J."/>
            <person name="Goh Y."/>
            <person name="Benson A."/>
            <person name="Baldwin K."/>
            <person name="Lee J.-H."/>
            <person name="Diaz-Muniz I."/>
            <person name="Dosti B."/>
            <person name="Smeianov V."/>
            <person name="Wechter W."/>
            <person name="Barabote R."/>
            <person name="Lorca G."/>
            <person name="Altermann E."/>
            <person name="Barrangou R."/>
            <person name="Ganesan B."/>
            <person name="Xie Y."/>
            <person name="Rawsthorne H."/>
            <person name="Tamir D."/>
            <person name="Parker C."/>
            <person name="Breidt F."/>
            <person name="Broadbent J.R."/>
            <person name="Hutkins R."/>
            <person name="O'Sullivan D."/>
            <person name="Steele J."/>
            <person name="Unlu G."/>
            <person name="Saier M.H. Jr."/>
            <person name="Klaenhammer T."/>
            <person name="Richardson P."/>
            <person name="Kozyavkin S."/>
            <person name="Weimer B.C."/>
            <person name="Mills D.A."/>
        </authorList>
    </citation>
    <scope>NUCLEOTIDE SEQUENCE [LARGE SCALE GENOMIC DNA]</scope>
    <source>
        <strain>ATCC BAA-491 / LMD-9</strain>
    </source>
</reference>
<gene>
    <name evidence="1" type="primary">leuC</name>
    <name type="ordered locus">STER_1168</name>
</gene>
<sequence length="460" mass="50879">MSGKSIFDKLWDRHVITGDEGQPQLMYVDQHYIHEVTSPQAFQGLRDAGRKVRRPDLTFGTFDHNVPTVNIFDIRDAISKAQIDKLAENVIEFGIDNASHGSDKQGIVHMVGPETGRTQPGKFIVCGDSHTATHGAFGAIAFGIGTSEVEHVFATQTLWQVKPKKMLVEFTGKPQKGIYSKDYILALIAKYGVACGVGYVVEYRGEAIDRLTMEERMTICNMSIEFGSKMGIMNPDQTTYDYMRGRECVPEDFDAAVADWKTLVSDDDAEYDKVIRMDVSELAPMVTWGTNPSMGVDFDTPFPEVRDMNDERAYHYMGLRPGQKAEDINLGYIFIGSCTNARLSDLQLAARIVKGKKISPNLTAIVVPGSRPVKRAAEKIGLDKIFKDAGFEWREPGCSMCLGMNPDKVPDGVHCASTSNRNFEDRQGFGAKTHLCSPAMAAAAAIAGHFVDVRRMPEVQ</sequence>
<name>LEUC_STRTD</name>
<protein>
    <recommendedName>
        <fullName evidence="1">3-isopropylmalate dehydratase large subunit</fullName>
        <ecNumber evidence="1">4.2.1.33</ecNumber>
    </recommendedName>
    <alternativeName>
        <fullName evidence="1">Alpha-IPM isomerase</fullName>
        <shortName evidence="1">IPMI</shortName>
    </alternativeName>
    <alternativeName>
        <fullName evidence="1">Isopropylmalate isomerase</fullName>
    </alternativeName>
</protein>
<comment type="function">
    <text evidence="1">Catalyzes the isomerization between 2-isopropylmalate and 3-isopropylmalate, via the formation of 2-isopropylmaleate.</text>
</comment>
<comment type="catalytic activity">
    <reaction evidence="1">
        <text>(2R,3S)-3-isopropylmalate = (2S)-2-isopropylmalate</text>
        <dbReference type="Rhea" id="RHEA:32287"/>
        <dbReference type="ChEBI" id="CHEBI:1178"/>
        <dbReference type="ChEBI" id="CHEBI:35121"/>
        <dbReference type="EC" id="4.2.1.33"/>
    </reaction>
</comment>
<comment type="cofactor">
    <cofactor evidence="1">
        <name>[4Fe-4S] cluster</name>
        <dbReference type="ChEBI" id="CHEBI:49883"/>
    </cofactor>
    <text evidence="1">Binds 1 [4Fe-4S] cluster per subunit.</text>
</comment>
<comment type="pathway">
    <text evidence="1">Amino-acid biosynthesis; L-leucine biosynthesis; L-leucine from 3-methyl-2-oxobutanoate: step 2/4.</text>
</comment>
<comment type="subunit">
    <text evidence="1">Heterodimer of LeuC and LeuD.</text>
</comment>
<comment type="similarity">
    <text evidence="1">Belongs to the aconitase/IPM isomerase family. LeuC type 1 subfamily.</text>
</comment>
<accession>Q03KB3</accession>
<dbReference type="EC" id="4.2.1.33" evidence="1"/>
<dbReference type="EMBL" id="CP000419">
    <property type="protein sequence ID" value="ABJ66359.1"/>
    <property type="molecule type" value="Genomic_DNA"/>
</dbReference>
<dbReference type="RefSeq" id="WP_011681245.1">
    <property type="nucleotide sequence ID" value="NZ_CP086001.1"/>
</dbReference>
<dbReference type="SMR" id="Q03KB3"/>
<dbReference type="KEGG" id="ste:STER_1168"/>
<dbReference type="HOGENOM" id="CLU_006714_3_4_9"/>
<dbReference type="UniPathway" id="UPA00048">
    <property type="reaction ID" value="UER00071"/>
</dbReference>
<dbReference type="GO" id="GO:0003861">
    <property type="term" value="F:3-isopropylmalate dehydratase activity"/>
    <property type="evidence" value="ECO:0007669"/>
    <property type="project" value="UniProtKB-UniRule"/>
</dbReference>
<dbReference type="GO" id="GO:0051539">
    <property type="term" value="F:4 iron, 4 sulfur cluster binding"/>
    <property type="evidence" value="ECO:0007669"/>
    <property type="project" value="UniProtKB-KW"/>
</dbReference>
<dbReference type="GO" id="GO:0046872">
    <property type="term" value="F:metal ion binding"/>
    <property type="evidence" value="ECO:0007669"/>
    <property type="project" value="UniProtKB-KW"/>
</dbReference>
<dbReference type="GO" id="GO:0009098">
    <property type="term" value="P:L-leucine biosynthetic process"/>
    <property type="evidence" value="ECO:0007669"/>
    <property type="project" value="UniProtKB-UniRule"/>
</dbReference>
<dbReference type="CDD" id="cd01583">
    <property type="entry name" value="IPMI"/>
    <property type="match status" value="1"/>
</dbReference>
<dbReference type="Gene3D" id="3.30.499.10">
    <property type="entry name" value="Aconitase, domain 3"/>
    <property type="match status" value="2"/>
</dbReference>
<dbReference type="HAMAP" id="MF_01026">
    <property type="entry name" value="LeuC_type1"/>
    <property type="match status" value="1"/>
</dbReference>
<dbReference type="InterPro" id="IPR004430">
    <property type="entry name" value="3-IsopropMal_deHydase_lsu"/>
</dbReference>
<dbReference type="InterPro" id="IPR015931">
    <property type="entry name" value="Acnase/IPM_dHydase_lsu_aba_1/3"/>
</dbReference>
<dbReference type="InterPro" id="IPR001030">
    <property type="entry name" value="Acoase/IPM_deHydtase_lsu_aba"/>
</dbReference>
<dbReference type="InterPro" id="IPR018136">
    <property type="entry name" value="Aconitase_4Fe-4S_BS"/>
</dbReference>
<dbReference type="InterPro" id="IPR036008">
    <property type="entry name" value="Aconitase_4Fe-4S_dom"/>
</dbReference>
<dbReference type="InterPro" id="IPR050067">
    <property type="entry name" value="IPM_dehydratase_rel_enz"/>
</dbReference>
<dbReference type="InterPro" id="IPR033941">
    <property type="entry name" value="IPMI_cat"/>
</dbReference>
<dbReference type="NCBIfam" id="TIGR00170">
    <property type="entry name" value="leuC"/>
    <property type="match status" value="1"/>
</dbReference>
<dbReference type="NCBIfam" id="NF004016">
    <property type="entry name" value="PRK05478.1"/>
    <property type="match status" value="1"/>
</dbReference>
<dbReference type="NCBIfam" id="NF009116">
    <property type="entry name" value="PRK12466.1"/>
    <property type="match status" value="1"/>
</dbReference>
<dbReference type="PANTHER" id="PTHR43822:SF9">
    <property type="entry name" value="3-ISOPROPYLMALATE DEHYDRATASE"/>
    <property type="match status" value="1"/>
</dbReference>
<dbReference type="PANTHER" id="PTHR43822">
    <property type="entry name" value="HOMOACONITASE, MITOCHONDRIAL-RELATED"/>
    <property type="match status" value="1"/>
</dbReference>
<dbReference type="Pfam" id="PF00330">
    <property type="entry name" value="Aconitase"/>
    <property type="match status" value="1"/>
</dbReference>
<dbReference type="PRINTS" id="PR00415">
    <property type="entry name" value="ACONITASE"/>
</dbReference>
<dbReference type="SUPFAM" id="SSF53732">
    <property type="entry name" value="Aconitase iron-sulfur domain"/>
    <property type="match status" value="1"/>
</dbReference>
<dbReference type="PROSITE" id="PS00450">
    <property type="entry name" value="ACONITASE_1"/>
    <property type="match status" value="1"/>
</dbReference>
<dbReference type="PROSITE" id="PS01244">
    <property type="entry name" value="ACONITASE_2"/>
    <property type="match status" value="1"/>
</dbReference>
<keyword id="KW-0004">4Fe-4S</keyword>
<keyword id="KW-0028">Amino-acid biosynthesis</keyword>
<keyword id="KW-0100">Branched-chain amino acid biosynthesis</keyword>
<keyword id="KW-0408">Iron</keyword>
<keyword id="KW-0411">Iron-sulfur</keyword>
<keyword id="KW-0432">Leucine biosynthesis</keyword>
<keyword id="KW-0456">Lyase</keyword>
<keyword id="KW-0479">Metal-binding</keyword>
<proteinExistence type="inferred from homology"/>
<feature type="chain" id="PRO_1000063620" description="3-isopropylmalate dehydratase large subunit">
    <location>
        <begin position="1"/>
        <end position="460"/>
    </location>
</feature>
<feature type="binding site" evidence="1">
    <location>
        <position position="338"/>
    </location>
    <ligand>
        <name>[4Fe-4S] cluster</name>
        <dbReference type="ChEBI" id="CHEBI:49883"/>
    </ligand>
</feature>
<feature type="binding site" evidence="1">
    <location>
        <position position="398"/>
    </location>
    <ligand>
        <name>[4Fe-4S] cluster</name>
        <dbReference type="ChEBI" id="CHEBI:49883"/>
    </ligand>
</feature>
<feature type="binding site" evidence="1">
    <location>
        <position position="401"/>
    </location>
    <ligand>
        <name>[4Fe-4S] cluster</name>
        <dbReference type="ChEBI" id="CHEBI:49883"/>
    </ligand>
</feature>
<evidence type="ECO:0000255" key="1">
    <source>
        <dbReference type="HAMAP-Rule" id="MF_01026"/>
    </source>
</evidence>